<feature type="chain" id="PRO_0000118236" description="NADH-ubiquinone oxidoreductase chain 6">
    <location>
        <begin position="1"/>
        <end position="173"/>
    </location>
</feature>
<feature type="transmembrane region" description="Helical" evidence="2">
    <location>
        <begin position="1"/>
        <end position="21"/>
    </location>
</feature>
<feature type="transmembrane region" description="Helical" evidence="2">
    <location>
        <begin position="27"/>
        <end position="47"/>
    </location>
</feature>
<feature type="transmembrane region" description="Helical" evidence="2">
    <location>
        <begin position="48"/>
        <end position="68"/>
    </location>
</feature>
<feature type="transmembrane region" description="Helical" evidence="2">
    <location>
        <begin position="87"/>
        <end position="107"/>
    </location>
</feature>
<feature type="transmembrane region" description="Helical" evidence="2">
    <location>
        <begin position="139"/>
        <end position="159"/>
    </location>
</feature>
<organism>
    <name type="scientific">Alca torda</name>
    <name type="common">Razorbill</name>
    <dbReference type="NCBI Taxonomy" id="28689"/>
    <lineage>
        <taxon>Eukaryota</taxon>
        <taxon>Metazoa</taxon>
        <taxon>Chordata</taxon>
        <taxon>Craniata</taxon>
        <taxon>Vertebrata</taxon>
        <taxon>Euteleostomi</taxon>
        <taxon>Archelosauria</taxon>
        <taxon>Archosauria</taxon>
        <taxon>Dinosauria</taxon>
        <taxon>Saurischia</taxon>
        <taxon>Theropoda</taxon>
        <taxon>Coelurosauria</taxon>
        <taxon>Aves</taxon>
        <taxon>Neognathae</taxon>
        <taxon>Neoaves</taxon>
        <taxon>Charadriiformes</taxon>
        <taxon>Alcidae</taxon>
        <taxon>Alca</taxon>
    </lineage>
</organism>
<comment type="function">
    <text evidence="1">Core subunit of the mitochondrial membrane respiratory chain NADH dehydrogenase (Complex I) that is believed to belong to the minimal assembly required for catalysis. Complex I functions in the transfer of electrons from NADH to the respiratory chain. The immediate electron acceptor for the enzyme is believed to be ubiquinone (By similarity).</text>
</comment>
<comment type="catalytic activity">
    <reaction>
        <text>a ubiquinone + NADH + 5 H(+)(in) = a ubiquinol + NAD(+) + 4 H(+)(out)</text>
        <dbReference type="Rhea" id="RHEA:29091"/>
        <dbReference type="Rhea" id="RHEA-COMP:9565"/>
        <dbReference type="Rhea" id="RHEA-COMP:9566"/>
        <dbReference type="ChEBI" id="CHEBI:15378"/>
        <dbReference type="ChEBI" id="CHEBI:16389"/>
        <dbReference type="ChEBI" id="CHEBI:17976"/>
        <dbReference type="ChEBI" id="CHEBI:57540"/>
        <dbReference type="ChEBI" id="CHEBI:57945"/>
        <dbReference type="EC" id="7.1.1.2"/>
    </reaction>
</comment>
<comment type="subcellular location">
    <subcellularLocation>
        <location evidence="3">Mitochondrion membrane</location>
        <topology evidence="3">Multi-pass membrane protein</topology>
    </subcellularLocation>
</comment>
<comment type="similarity">
    <text evidence="3">Belongs to the complex I subunit 6 family.</text>
</comment>
<accession>P43193</accession>
<keyword id="KW-0249">Electron transport</keyword>
<keyword id="KW-0472">Membrane</keyword>
<keyword id="KW-0496">Mitochondrion</keyword>
<keyword id="KW-0520">NAD</keyword>
<keyword id="KW-0679">Respiratory chain</keyword>
<keyword id="KW-1278">Translocase</keyword>
<keyword id="KW-0812">Transmembrane</keyword>
<keyword id="KW-1133">Transmembrane helix</keyword>
<keyword id="KW-0813">Transport</keyword>
<keyword id="KW-0830">Ubiquinone</keyword>
<gene>
    <name type="primary">MT-ND6</name>
    <name type="synonym">MTND6</name>
    <name type="synonym">NADH6</name>
    <name type="synonym">ND6</name>
</gene>
<evidence type="ECO:0000250" key="1"/>
<evidence type="ECO:0000255" key="2"/>
<evidence type="ECO:0000305" key="3"/>
<protein>
    <recommendedName>
        <fullName>NADH-ubiquinone oxidoreductase chain 6</fullName>
        <ecNumber>7.1.1.2</ecNumber>
    </recommendedName>
    <alternativeName>
        <fullName>NADH dehydrogenase subunit 6</fullName>
    </alternativeName>
</protein>
<name>NU6M_ALCTO</name>
<proteinExistence type="inferred from homology"/>
<sequence>MTYFMFFLGLCFVLGGLAVASNPSPYYGVVGLVLASVAGCGWLLSLGISFVSLVLFMVYLGGMLVVFVYSVSLAADPFPEAWGDWRVIGYGAGFVGVLMVGMVIGGFVECWDFGVVTVDSVGMFSVRLDFGGVAMFYSCGVGMFLVAGWGLLLTLFVVLELVRGLTRGAIRAV</sequence>
<geneLocation type="mitochondrion"/>
<reference key="1">
    <citation type="journal article" date="1994" name="Curr. Genet.">
        <title>Intragenic rearrangements in the mitochondrial NADH dehydrogenase subunit 6 gene of vertebrates.</title>
        <authorList>
            <person name="Moum T."/>
            <person name="Willassen N.P."/>
            <person name="Johansen S."/>
        </authorList>
    </citation>
    <scope>NUCLEOTIDE SEQUENCE [GENOMIC DNA]</scope>
</reference>
<dbReference type="EC" id="7.1.1.2"/>
<dbReference type="EMBL" id="X73916">
    <property type="protein sequence ID" value="CAA52121.1"/>
    <property type="molecule type" value="Genomic_DNA"/>
</dbReference>
<dbReference type="PIR" id="S44397">
    <property type="entry name" value="S44397"/>
</dbReference>
<dbReference type="SMR" id="P43193"/>
<dbReference type="GO" id="GO:0031966">
    <property type="term" value="C:mitochondrial membrane"/>
    <property type="evidence" value="ECO:0007669"/>
    <property type="project" value="UniProtKB-SubCell"/>
</dbReference>
<dbReference type="GO" id="GO:0008137">
    <property type="term" value="F:NADH dehydrogenase (ubiquinone) activity"/>
    <property type="evidence" value="ECO:0007669"/>
    <property type="project" value="UniProtKB-EC"/>
</dbReference>
<dbReference type="Gene3D" id="1.20.120.1200">
    <property type="entry name" value="NADH-ubiquinone/plastoquinone oxidoreductase chain 6, subunit NuoJ"/>
    <property type="match status" value="1"/>
</dbReference>
<dbReference type="InterPro" id="IPR050269">
    <property type="entry name" value="ComplexI_Subunit6"/>
</dbReference>
<dbReference type="InterPro" id="IPR001457">
    <property type="entry name" value="NADH_UbQ/plastoQ_OxRdtase_su6"/>
</dbReference>
<dbReference type="InterPro" id="IPR042106">
    <property type="entry name" value="Nuo/plastoQ_OxRdtase_6_NuoJ"/>
</dbReference>
<dbReference type="PANTHER" id="PTHR11435">
    <property type="entry name" value="NADH UBIQUINONE OXIDOREDUCTASE SUBUNIT ND6"/>
    <property type="match status" value="1"/>
</dbReference>
<dbReference type="PANTHER" id="PTHR11435:SF1">
    <property type="entry name" value="NADH-UBIQUINONE OXIDOREDUCTASE CHAIN 6"/>
    <property type="match status" value="1"/>
</dbReference>
<dbReference type="Pfam" id="PF00499">
    <property type="entry name" value="Oxidored_q3"/>
    <property type="match status" value="1"/>
</dbReference>